<dbReference type="EMBL" id="CP000911">
    <property type="protein sequence ID" value="ABY38337.1"/>
    <property type="molecule type" value="Genomic_DNA"/>
</dbReference>
<dbReference type="RefSeq" id="WP_002964365.1">
    <property type="nucleotide sequence ID" value="NC_010169.1"/>
</dbReference>
<dbReference type="SMR" id="B0CH36"/>
<dbReference type="GeneID" id="97533521"/>
<dbReference type="KEGG" id="bmt:BSUIS_A1286"/>
<dbReference type="HOGENOM" id="CLU_072226_1_1_5"/>
<dbReference type="Proteomes" id="UP000008545">
    <property type="component" value="Chromosome I"/>
</dbReference>
<dbReference type="GO" id="GO:0015935">
    <property type="term" value="C:small ribosomal subunit"/>
    <property type="evidence" value="ECO:0007669"/>
    <property type="project" value="InterPro"/>
</dbReference>
<dbReference type="GO" id="GO:0019843">
    <property type="term" value="F:rRNA binding"/>
    <property type="evidence" value="ECO:0007669"/>
    <property type="project" value="UniProtKB-UniRule"/>
</dbReference>
<dbReference type="GO" id="GO:0003735">
    <property type="term" value="F:structural constituent of ribosome"/>
    <property type="evidence" value="ECO:0007669"/>
    <property type="project" value="InterPro"/>
</dbReference>
<dbReference type="GO" id="GO:0000049">
    <property type="term" value="F:tRNA binding"/>
    <property type="evidence" value="ECO:0007669"/>
    <property type="project" value="UniProtKB-UniRule"/>
</dbReference>
<dbReference type="GO" id="GO:0006412">
    <property type="term" value="P:translation"/>
    <property type="evidence" value="ECO:0007669"/>
    <property type="project" value="UniProtKB-UniRule"/>
</dbReference>
<dbReference type="CDD" id="cd14869">
    <property type="entry name" value="uS7_Bacteria"/>
    <property type="match status" value="1"/>
</dbReference>
<dbReference type="FunFam" id="1.10.455.10:FF:000001">
    <property type="entry name" value="30S ribosomal protein S7"/>
    <property type="match status" value="1"/>
</dbReference>
<dbReference type="Gene3D" id="1.10.455.10">
    <property type="entry name" value="Ribosomal protein S7 domain"/>
    <property type="match status" value="1"/>
</dbReference>
<dbReference type="HAMAP" id="MF_00480_B">
    <property type="entry name" value="Ribosomal_uS7_B"/>
    <property type="match status" value="1"/>
</dbReference>
<dbReference type="InterPro" id="IPR000235">
    <property type="entry name" value="Ribosomal_uS7"/>
</dbReference>
<dbReference type="InterPro" id="IPR005717">
    <property type="entry name" value="Ribosomal_uS7_bac/org-type"/>
</dbReference>
<dbReference type="InterPro" id="IPR020606">
    <property type="entry name" value="Ribosomal_uS7_CS"/>
</dbReference>
<dbReference type="InterPro" id="IPR023798">
    <property type="entry name" value="Ribosomal_uS7_dom"/>
</dbReference>
<dbReference type="InterPro" id="IPR036823">
    <property type="entry name" value="Ribosomal_uS7_dom_sf"/>
</dbReference>
<dbReference type="NCBIfam" id="TIGR01029">
    <property type="entry name" value="rpsG_bact"/>
    <property type="match status" value="1"/>
</dbReference>
<dbReference type="PANTHER" id="PTHR11205">
    <property type="entry name" value="RIBOSOMAL PROTEIN S7"/>
    <property type="match status" value="1"/>
</dbReference>
<dbReference type="Pfam" id="PF00177">
    <property type="entry name" value="Ribosomal_S7"/>
    <property type="match status" value="1"/>
</dbReference>
<dbReference type="PIRSF" id="PIRSF002122">
    <property type="entry name" value="RPS7p_RPS7a_RPS5e_RPS7o"/>
    <property type="match status" value="1"/>
</dbReference>
<dbReference type="SUPFAM" id="SSF47973">
    <property type="entry name" value="Ribosomal protein S7"/>
    <property type="match status" value="1"/>
</dbReference>
<dbReference type="PROSITE" id="PS00052">
    <property type="entry name" value="RIBOSOMAL_S7"/>
    <property type="match status" value="1"/>
</dbReference>
<proteinExistence type="inferred from homology"/>
<gene>
    <name evidence="1" type="primary">rpsG</name>
    <name type="ordered locus">BSUIS_A1286</name>
</gene>
<protein>
    <recommendedName>
        <fullName evidence="1">Small ribosomal subunit protein uS7</fullName>
    </recommendedName>
    <alternativeName>
        <fullName evidence="2">30S ribosomal protein S7</fullName>
    </alternativeName>
</protein>
<accession>B0CH36</accession>
<comment type="function">
    <text evidence="1">One of the primary rRNA binding proteins, it binds directly to 16S rRNA where it nucleates assembly of the head domain of the 30S subunit. Is located at the subunit interface close to the decoding center, probably blocks exit of the E-site tRNA.</text>
</comment>
<comment type="subunit">
    <text evidence="1">Part of the 30S ribosomal subunit. Contacts proteins S9 and S11.</text>
</comment>
<comment type="similarity">
    <text evidence="1">Belongs to the universal ribosomal protein uS7 family.</text>
</comment>
<sequence length="156" mass="17625">MSRRHKAEKREINPDPKFGDLVITKFMNAVMLHGKKSVAESIVYGALDAIEAKAKSEPVALFHQALDNVAPHIEVRSRRVGGATYQVPVDVRPERRQALAIRWLINAARGRNETTMVDRLSGELLDAANNRGSAVKKREDTHRMAEANRAFSHYRW</sequence>
<organism>
    <name type="scientific">Brucella suis (strain ATCC 23445 / NCTC 10510)</name>
    <dbReference type="NCBI Taxonomy" id="470137"/>
    <lineage>
        <taxon>Bacteria</taxon>
        <taxon>Pseudomonadati</taxon>
        <taxon>Pseudomonadota</taxon>
        <taxon>Alphaproteobacteria</taxon>
        <taxon>Hyphomicrobiales</taxon>
        <taxon>Brucellaceae</taxon>
        <taxon>Brucella/Ochrobactrum group</taxon>
        <taxon>Brucella</taxon>
    </lineage>
</organism>
<reference key="1">
    <citation type="submission" date="2007-12" db="EMBL/GenBank/DDBJ databases">
        <title>Brucella suis ATCC 23445 whole genome shotgun sequencing project.</title>
        <authorList>
            <person name="Setubal J.C."/>
            <person name="Bowns C."/>
            <person name="Boyle S."/>
            <person name="Crasta O.R."/>
            <person name="Czar M.J."/>
            <person name="Dharmanolla C."/>
            <person name="Gillespie J.J."/>
            <person name="Kenyon R.W."/>
            <person name="Lu J."/>
            <person name="Mane S."/>
            <person name="Mohapatra S."/>
            <person name="Nagrani S."/>
            <person name="Purkayastha A."/>
            <person name="Rajasimha H.K."/>
            <person name="Shallom J.M."/>
            <person name="Shallom S."/>
            <person name="Shukla M."/>
            <person name="Snyder E.E."/>
            <person name="Sobral B.W."/>
            <person name="Wattam A.R."/>
            <person name="Will R."/>
            <person name="Williams K."/>
            <person name="Yoo H."/>
            <person name="Bruce D."/>
            <person name="Detter C."/>
            <person name="Munk C."/>
            <person name="Brettin T.S."/>
        </authorList>
    </citation>
    <scope>NUCLEOTIDE SEQUENCE [LARGE SCALE GENOMIC DNA]</scope>
    <source>
        <strain>ATCC 23445 / NCTC 10510</strain>
    </source>
</reference>
<keyword id="KW-0687">Ribonucleoprotein</keyword>
<keyword id="KW-0689">Ribosomal protein</keyword>
<keyword id="KW-0694">RNA-binding</keyword>
<keyword id="KW-0699">rRNA-binding</keyword>
<keyword id="KW-0820">tRNA-binding</keyword>
<feature type="chain" id="PRO_1000081272" description="Small ribosomal subunit protein uS7">
    <location>
        <begin position="1"/>
        <end position="156"/>
    </location>
</feature>
<evidence type="ECO:0000255" key="1">
    <source>
        <dbReference type="HAMAP-Rule" id="MF_00480"/>
    </source>
</evidence>
<evidence type="ECO:0000305" key="2"/>
<name>RS7_BRUSI</name>